<keyword id="KW-0238">DNA-binding</keyword>
<keyword id="KW-0240">DNA-directed RNA polymerase</keyword>
<keyword id="KW-0535">Nitrogen fixation</keyword>
<keyword id="KW-0548">Nucleotidyltransferase</keyword>
<keyword id="KW-0731">Sigma factor</keyword>
<keyword id="KW-0804">Transcription</keyword>
<keyword id="KW-0805">Transcription regulation</keyword>
<keyword id="KW-0808">Transferase</keyword>
<dbReference type="EMBL" id="U23471">
    <property type="protein sequence ID" value="AAA80300.1"/>
    <property type="molecule type" value="Genomic_DNA"/>
</dbReference>
<dbReference type="SMR" id="P49989"/>
<dbReference type="STRING" id="29449.NXC12_CH00405"/>
<dbReference type="GO" id="GO:0000428">
    <property type="term" value="C:DNA-directed RNA polymerase complex"/>
    <property type="evidence" value="ECO:0007669"/>
    <property type="project" value="UniProtKB-KW"/>
</dbReference>
<dbReference type="GO" id="GO:0003677">
    <property type="term" value="F:DNA binding"/>
    <property type="evidence" value="ECO:0007669"/>
    <property type="project" value="UniProtKB-KW"/>
</dbReference>
<dbReference type="GO" id="GO:0001216">
    <property type="term" value="F:DNA-binding transcription activator activity"/>
    <property type="evidence" value="ECO:0007669"/>
    <property type="project" value="InterPro"/>
</dbReference>
<dbReference type="GO" id="GO:0016779">
    <property type="term" value="F:nucleotidyltransferase activity"/>
    <property type="evidence" value="ECO:0007669"/>
    <property type="project" value="UniProtKB-KW"/>
</dbReference>
<dbReference type="GO" id="GO:0016987">
    <property type="term" value="F:sigma factor activity"/>
    <property type="evidence" value="ECO:0007669"/>
    <property type="project" value="UniProtKB-KW"/>
</dbReference>
<dbReference type="GO" id="GO:0006352">
    <property type="term" value="P:DNA-templated transcription initiation"/>
    <property type="evidence" value="ECO:0007669"/>
    <property type="project" value="InterPro"/>
</dbReference>
<dbReference type="GO" id="GO:0009399">
    <property type="term" value="P:nitrogen fixation"/>
    <property type="evidence" value="ECO:0007669"/>
    <property type="project" value="UniProtKB-KW"/>
</dbReference>
<dbReference type="Gene3D" id="1.10.10.60">
    <property type="entry name" value="Homeodomain-like"/>
    <property type="match status" value="1"/>
</dbReference>
<dbReference type="Gene3D" id="1.10.10.1330">
    <property type="entry name" value="RNA polymerase sigma-54 factor, core-binding domain"/>
    <property type="match status" value="1"/>
</dbReference>
<dbReference type="InterPro" id="IPR000394">
    <property type="entry name" value="RNA_pol_sigma_54"/>
</dbReference>
<dbReference type="InterPro" id="IPR007046">
    <property type="entry name" value="RNA_pol_sigma_54_core-bd"/>
</dbReference>
<dbReference type="InterPro" id="IPR007634">
    <property type="entry name" value="RNA_pol_sigma_54_DNA-bd"/>
</dbReference>
<dbReference type="InterPro" id="IPR038709">
    <property type="entry name" value="RpoN_core-bd_sf"/>
</dbReference>
<dbReference type="NCBIfam" id="NF004596">
    <property type="entry name" value="PRK05932.1-3"/>
    <property type="match status" value="1"/>
</dbReference>
<dbReference type="NCBIfam" id="NF009118">
    <property type="entry name" value="PRK12469.1"/>
    <property type="match status" value="1"/>
</dbReference>
<dbReference type="NCBIfam" id="TIGR02395">
    <property type="entry name" value="rpoN_sigma"/>
    <property type="match status" value="1"/>
</dbReference>
<dbReference type="PANTHER" id="PTHR32248">
    <property type="entry name" value="RNA POLYMERASE SIGMA-54 FACTOR"/>
    <property type="match status" value="1"/>
</dbReference>
<dbReference type="PANTHER" id="PTHR32248:SF4">
    <property type="entry name" value="RNA POLYMERASE SIGMA-54 FACTOR"/>
    <property type="match status" value="1"/>
</dbReference>
<dbReference type="Pfam" id="PF00309">
    <property type="entry name" value="Sigma54_AID"/>
    <property type="match status" value="1"/>
</dbReference>
<dbReference type="Pfam" id="PF04963">
    <property type="entry name" value="Sigma54_CBD"/>
    <property type="match status" value="1"/>
</dbReference>
<dbReference type="Pfam" id="PF04552">
    <property type="entry name" value="Sigma54_DBD"/>
    <property type="match status" value="1"/>
</dbReference>
<dbReference type="PIRSF" id="PIRSF000774">
    <property type="entry name" value="RpoN"/>
    <property type="match status" value="1"/>
</dbReference>
<dbReference type="PRINTS" id="PR00045">
    <property type="entry name" value="SIGMA54FCT"/>
</dbReference>
<dbReference type="PROSITE" id="PS00717">
    <property type="entry name" value="SIGMA54_1"/>
    <property type="match status" value="1"/>
</dbReference>
<dbReference type="PROSITE" id="PS00718">
    <property type="entry name" value="SIGMA54_2"/>
    <property type="match status" value="1"/>
</dbReference>
<dbReference type="PROSITE" id="PS50044">
    <property type="entry name" value="SIGMA54_3"/>
    <property type="match status" value="1"/>
</dbReference>
<reference key="1">
    <citation type="journal article" date="1998" name="J. Bacteriol.">
        <title>The Rhizobium etli rpoN locus: DNA sequence analysis and phenotypical characterization of rpoN, ptsN, and ptsA mutants.</title>
        <authorList>
            <person name="de Wilde P."/>
            <person name="Vanderleyden J."/>
        </authorList>
    </citation>
    <scope>NUCLEOTIDE SEQUENCE [GENOMIC DNA]</scope>
    <source>
        <strain>CNPAF512</strain>
    </source>
</reference>
<name>RP54_RHIET</name>
<protein>
    <recommendedName>
        <fullName>RNA polymerase sigma-54 factor</fullName>
    </recommendedName>
</protein>
<accession>P49989</accession>
<evidence type="ECO:0000250" key="1"/>
<evidence type="ECO:0000255" key="2"/>
<evidence type="ECO:0000256" key="3">
    <source>
        <dbReference type="SAM" id="MobiDB-lite"/>
    </source>
</evidence>
<evidence type="ECO:0000305" key="4"/>
<sequence length="520" mass="57478">MALSANLFLRQSQSLVMTPQLMQSIQLLQMTHFELNQFIAQEVEKNPLLEFPSNDGEAGDERGAGEDEPFGQPSEDAGSDDGADSRAEALSSDWYDNGGSESTGRLNDELDANYTNVFPDDGGPQRLDAPELVGQWKSMPGSAEGADYDLDDFVAGQLSLRDHLAQQIPFVLPDMTDRLIAQNFVDQLDDAGYLQTDLVETGERLGTSLEQVEHVLAALQTLDPPGVFARSLAECLAIQLRQKDRYDPAMQALVANLELLARRDFATLKRLCGVDEEDLLDMLGEIRQLNPKPGGGFEAGVSEAIMPDVVVRPSADGGWLVELNPDTLPRVLVNQSYFSRVTRNGEDHAFLSECLQSANWLTRTLDQRAKTIMKVASEIVRQQDAFLLNGVDHLRPLNLKTVAEAIKMHESTVSRVTSNKYMLTPRGLFELKYFFTVSISAVEGGEQHSAEAVRATRFRALIMQESPDAVLSDDDIVDMLKKGGIDLARRTVAKYREAMNIASSVQRRREKRALAKVAGF</sequence>
<feature type="chain" id="PRO_0000205537" description="RNA polymerase sigma-54 factor">
    <location>
        <begin position="1"/>
        <end position="520"/>
    </location>
</feature>
<feature type="DNA-binding region" description="H-T-H motif" evidence="2">
    <location>
        <begin position="398"/>
        <end position="417"/>
    </location>
</feature>
<feature type="region of interest" description="Disordered" evidence="3">
    <location>
        <begin position="49"/>
        <end position="107"/>
    </location>
</feature>
<feature type="short sequence motif" description="RPON box">
    <location>
        <begin position="488"/>
        <end position="496"/>
    </location>
</feature>
<organism>
    <name type="scientific">Rhizobium etli</name>
    <dbReference type="NCBI Taxonomy" id="29449"/>
    <lineage>
        <taxon>Bacteria</taxon>
        <taxon>Pseudomonadati</taxon>
        <taxon>Pseudomonadota</taxon>
        <taxon>Alphaproteobacteria</taxon>
        <taxon>Hyphomicrobiales</taxon>
        <taxon>Rhizobiaceae</taxon>
        <taxon>Rhizobium/Agrobacterium group</taxon>
        <taxon>Rhizobium</taxon>
    </lineage>
</organism>
<gene>
    <name type="primary">rpoN</name>
    <name type="synonym">ntrA</name>
</gene>
<proteinExistence type="inferred from homology"/>
<comment type="function">
    <text evidence="1">Sigma factors are initiation factors that promote the attachment of RNA polymerase to specific initiation sites and are then released. This sigma factor is responsible for the expression of the nitrogen fixation genes (nif operon), GlnA and DctA for dicarboxylate transport. The open complex (sigma-54 and core RNA polymerase) serves as the receptor for receipt of the melting signal from the remotely bound activator proteins NifA, NtrC, or DctD for the expression of the regulated proteins (By similarity).</text>
</comment>
<comment type="similarity">
    <text evidence="4">Belongs to the sigma-54 factor family.</text>
</comment>
<comment type="caution">
    <text evidence="4">Strain CNPAF512 was originally thought to originate from R.leguminosarum bv phaseoli.</text>
</comment>